<feature type="chain" id="PRO_1000188974" description="Acetyl esterase">
    <location>
        <begin position="1"/>
        <end position="319"/>
    </location>
</feature>
<feature type="short sequence motif" description="Involved in the stabilization of the negatively charged intermediate by the formation of the oxyanion hole" evidence="1">
    <location>
        <begin position="91"/>
        <end position="93"/>
    </location>
</feature>
<feature type="active site" evidence="2">
    <location>
        <position position="165"/>
    </location>
</feature>
<feature type="active site" evidence="2">
    <location>
        <position position="262"/>
    </location>
</feature>
<feature type="active site" evidence="2">
    <location>
        <position position="292"/>
    </location>
</feature>
<evidence type="ECO:0000250" key="1">
    <source>
        <dbReference type="UniProtKB" id="Q5NUF3"/>
    </source>
</evidence>
<evidence type="ECO:0000255" key="2">
    <source>
        <dbReference type="HAMAP-Rule" id="MF_01958"/>
    </source>
</evidence>
<protein>
    <recommendedName>
        <fullName evidence="2">Acetyl esterase</fullName>
        <ecNumber evidence="2">3.1.1.-</ecNumber>
    </recommendedName>
</protein>
<reference key="1">
    <citation type="journal article" date="2008" name="J. Bacteriol.">
        <title>The pangenome structure of Escherichia coli: comparative genomic analysis of E. coli commensal and pathogenic isolates.</title>
        <authorList>
            <person name="Rasko D.A."/>
            <person name="Rosovitz M.J."/>
            <person name="Myers G.S.A."/>
            <person name="Mongodin E.F."/>
            <person name="Fricke W.F."/>
            <person name="Gajer P."/>
            <person name="Crabtree J."/>
            <person name="Sebaihia M."/>
            <person name="Thomson N.R."/>
            <person name="Chaudhuri R."/>
            <person name="Henderson I.R."/>
            <person name="Sperandio V."/>
            <person name="Ravel J."/>
        </authorList>
    </citation>
    <scope>NUCLEOTIDE SEQUENCE [LARGE SCALE GENOMIC DNA]</scope>
    <source>
        <strain>E24377A / ETEC</strain>
    </source>
</reference>
<keyword id="KW-0963">Cytoplasm</keyword>
<keyword id="KW-0378">Hydrolase</keyword>
<keyword id="KW-1185">Reference proteome</keyword>
<keyword id="KW-0719">Serine esterase</keyword>
<comment type="function">
    <text evidence="2">Displays esterase activity towards short chain fatty esters (acyl chain length of up to 8 carbons). Able to hydrolyze triacetylglycerol (triacetin) and tributyrylglycerol (tributyrin), but not trioleylglycerol (triolein) or cholesterol oleate. Negatively regulates MalT activity by antagonizing maltotriose binding. Inhibits MelA galactosidase activity.</text>
</comment>
<comment type="subunit">
    <text evidence="2">Homodimer. Interacts with MalT and MelA.</text>
</comment>
<comment type="subcellular location">
    <subcellularLocation>
        <location evidence="2">Cytoplasm</location>
    </subcellularLocation>
</comment>
<comment type="similarity">
    <text evidence="2">Belongs to the 'GDXG' lipolytic enzyme family.</text>
</comment>
<organism>
    <name type="scientific">Escherichia coli O139:H28 (strain E24377A / ETEC)</name>
    <dbReference type="NCBI Taxonomy" id="331111"/>
    <lineage>
        <taxon>Bacteria</taxon>
        <taxon>Pseudomonadati</taxon>
        <taxon>Pseudomonadota</taxon>
        <taxon>Gammaproteobacteria</taxon>
        <taxon>Enterobacterales</taxon>
        <taxon>Enterobacteriaceae</taxon>
        <taxon>Escherichia</taxon>
    </lineage>
</organism>
<gene>
    <name evidence="2" type="primary">aes</name>
    <name type="ordered locus">EcE24377A_0514</name>
</gene>
<dbReference type="EC" id="3.1.1.-" evidence="2"/>
<dbReference type="EMBL" id="CP000800">
    <property type="protein sequence ID" value="ABV20987.1"/>
    <property type="molecule type" value="Genomic_DNA"/>
</dbReference>
<dbReference type="RefSeq" id="WP_000801847.1">
    <property type="nucleotide sequence ID" value="NC_009801.1"/>
</dbReference>
<dbReference type="SMR" id="A7ZIN6"/>
<dbReference type="ESTHER" id="ecoli-Aes">
    <property type="family name" value="Acetyl_esterase"/>
</dbReference>
<dbReference type="MEROPS" id="S09.A47"/>
<dbReference type="SwissPalm" id="A7ZIN6"/>
<dbReference type="KEGG" id="ecw:EcE24377A_0514"/>
<dbReference type="HOGENOM" id="CLU_012494_6_4_6"/>
<dbReference type="Proteomes" id="UP000001122">
    <property type="component" value="Chromosome"/>
</dbReference>
<dbReference type="GO" id="GO:0005737">
    <property type="term" value="C:cytoplasm"/>
    <property type="evidence" value="ECO:0007669"/>
    <property type="project" value="UniProtKB-SubCell"/>
</dbReference>
<dbReference type="GO" id="GO:0052689">
    <property type="term" value="F:carboxylic ester hydrolase activity"/>
    <property type="evidence" value="ECO:0007669"/>
    <property type="project" value="UniProtKB-UniRule"/>
</dbReference>
<dbReference type="FunFam" id="3.40.50.1820:FF:000035">
    <property type="entry name" value="Acetyl esterase"/>
    <property type="match status" value="1"/>
</dbReference>
<dbReference type="Gene3D" id="3.40.50.1820">
    <property type="entry name" value="alpha/beta hydrolase"/>
    <property type="match status" value="1"/>
</dbReference>
<dbReference type="HAMAP" id="MF_01958">
    <property type="entry name" value="Acetyl_esterase"/>
    <property type="match status" value="1"/>
</dbReference>
<dbReference type="InterPro" id="IPR013094">
    <property type="entry name" value="AB_hydrolase_3"/>
</dbReference>
<dbReference type="InterPro" id="IPR029058">
    <property type="entry name" value="AB_hydrolase_fold"/>
</dbReference>
<dbReference type="InterPro" id="IPR023508">
    <property type="entry name" value="Acetyl_esterase"/>
</dbReference>
<dbReference type="InterPro" id="IPR050300">
    <property type="entry name" value="GDXG_lipolytic_enzyme"/>
</dbReference>
<dbReference type="InterPro" id="IPR002168">
    <property type="entry name" value="Lipase_GDXG_HIS_AS"/>
</dbReference>
<dbReference type="InterPro" id="IPR033140">
    <property type="entry name" value="Lipase_GDXG_put_SER_AS"/>
</dbReference>
<dbReference type="NCBIfam" id="NF007547">
    <property type="entry name" value="PRK10162.1"/>
    <property type="match status" value="1"/>
</dbReference>
<dbReference type="PANTHER" id="PTHR48081">
    <property type="entry name" value="AB HYDROLASE SUPERFAMILY PROTEIN C4A8.06C"/>
    <property type="match status" value="1"/>
</dbReference>
<dbReference type="PANTHER" id="PTHR48081:SF8">
    <property type="entry name" value="ALPHA_BETA HYDROLASE FOLD-3 DOMAIN-CONTAINING PROTEIN-RELATED"/>
    <property type="match status" value="1"/>
</dbReference>
<dbReference type="Pfam" id="PF07859">
    <property type="entry name" value="Abhydrolase_3"/>
    <property type="match status" value="1"/>
</dbReference>
<dbReference type="SUPFAM" id="SSF53474">
    <property type="entry name" value="alpha/beta-Hydrolases"/>
    <property type="match status" value="1"/>
</dbReference>
<dbReference type="PROSITE" id="PS01173">
    <property type="entry name" value="LIPASE_GDXG_HIS"/>
    <property type="match status" value="1"/>
</dbReference>
<dbReference type="PROSITE" id="PS01174">
    <property type="entry name" value="LIPASE_GDXG_SER"/>
    <property type="match status" value="1"/>
</dbReference>
<sequence length="319" mass="36054">MKPENKLPVLDLISAEMKTVVNTLQSDLPSWPATGTIAEQRQYYTLERRFWNAGAPEMATRAYMVPTKYGQVETRLFCPQPDSPATLFYLHGGGFILGNLDTHDRIMRLLASYSQCTVIGIDYPLSPEARFPQAIEEIVAACCYFHQQAEDYQINMSRIGFAGDSAGAMLTLASALWLRDKQIDCGKIAGVLLWYGLYGLRDSVTRRLLGGVWDGLTQQDLQMYEEAYLSNDADRESPYYCLFNNDLTREVPPCFIAGAEFDPLLDDSRLLYQTLAAHQQPCEFKLYPGTLHAFLHYSRMMKTADEALRDGAQFFTAQL</sequence>
<name>AES_ECO24</name>
<proteinExistence type="inferred from homology"/>
<accession>A7ZIN6</accession>